<feature type="chain" id="PRO_0000238826" description="Cytochrome c-type biogenesis protein CcmE">
    <location>
        <begin position="1"/>
        <end position="149"/>
    </location>
</feature>
<feature type="topological domain" description="Cytoplasmic" evidence="1">
    <location>
        <begin position="1"/>
        <end position="7"/>
    </location>
</feature>
<feature type="transmembrane region" description="Helical; Signal-anchor for type II membrane protein" evidence="1">
    <location>
        <begin position="8"/>
        <end position="28"/>
    </location>
</feature>
<feature type="topological domain" description="Periplasmic" evidence="1">
    <location>
        <begin position="29"/>
        <end position="149"/>
    </location>
</feature>
<feature type="binding site" description="covalent" evidence="1">
    <location>
        <position position="123"/>
    </location>
    <ligand>
        <name>heme</name>
        <dbReference type="ChEBI" id="CHEBI:30413"/>
    </ligand>
</feature>
<feature type="binding site" description="axial binding residue" evidence="1">
    <location>
        <position position="127"/>
    </location>
    <ligand>
        <name>heme</name>
        <dbReference type="ChEBI" id="CHEBI:30413"/>
    </ligand>
    <ligandPart>
        <name>Fe</name>
        <dbReference type="ChEBI" id="CHEBI:18248"/>
    </ligandPart>
</feature>
<gene>
    <name evidence="1" type="primary">ccmE</name>
    <name evidence="1" type="synonym">cycJ</name>
    <name type="ordered locus">NE0767</name>
</gene>
<evidence type="ECO:0000255" key="1">
    <source>
        <dbReference type="HAMAP-Rule" id="MF_01959"/>
    </source>
</evidence>
<protein>
    <recommendedName>
        <fullName evidence="1">Cytochrome c-type biogenesis protein CcmE</fullName>
    </recommendedName>
    <alternativeName>
        <fullName evidence="1">Cytochrome c maturation protein E</fullName>
    </alternativeName>
    <alternativeName>
        <fullName evidence="1">Heme chaperone CcmE</fullName>
    </alternativeName>
</protein>
<comment type="function">
    <text evidence="1">Heme chaperone required for the biogenesis of c-type cytochromes. Transiently binds heme delivered by CcmC and transfers the heme to apo-cytochromes in a process facilitated by CcmF and CcmH.</text>
</comment>
<comment type="subcellular location">
    <subcellularLocation>
        <location evidence="1">Cell inner membrane</location>
        <topology evidence="1">Single-pass type II membrane protein</topology>
        <orientation evidence="1">Periplasmic side</orientation>
    </subcellularLocation>
</comment>
<comment type="similarity">
    <text evidence="1">Belongs to the CcmE/CycJ family.</text>
</comment>
<reference key="1">
    <citation type="journal article" date="2003" name="J. Bacteriol.">
        <title>Complete genome sequence of the ammonia-oxidizing bacterium and obligate chemolithoautotroph Nitrosomonas europaea.</title>
        <authorList>
            <person name="Chain P."/>
            <person name="Lamerdin J.E."/>
            <person name="Larimer F.W."/>
            <person name="Regala W."/>
            <person name="Lao V."/>
            <person name="Land M.L."/>
            <person name="Hauser L."/>
            <person name="Hooper A.B."/>
            <person name="Klotz M.G."/>
            <person name="Norton J."/>
            <person name="Sayavedra-Soto L.A."/>
            <person name="Arciero D.M."/>
            <person name="Hommes N.G."/>
            <person name="Whittaker M.M."/>
            <person name="Arp D.J."/>
        </authorList>
    </citation>
    <scope>NUCLEOTIDE SEQUENCE [LARGE SCALE GENOMIC DNA]</scope>
    <source>
        <strain>ATCC 19718 / CIP 103999 / KCTC 2705 / NBRC 14298</strain>
    </source>
</reference>
<organism>
    <name type="scientific">Nitrosomonas europaea (strain ATCC 19718 / CIP 103999 / KCTC 2705 / NBRC 14298)</name>
    <dbReference type="NCBI Taxonomy" id="228410"/>
    <lineage>
        <taxon>Bacteria</taxon>
        <taxon>Pseudomonadati</taxon>
        <taxon>Pseudomonadota</taxon>
        <taxon>Betaproteobacteria</taxon>
        <taxon>Nitrosomonadales</taxon>
        <taxon>Nitrosomonadaceae</taxon>
        <taxon>Nitrosomonas</taxon>
    </lineage>
</organism>
<dbReference type="EMBL" id="AL954747">
    <property type="protein sequence ID" value="CAD84678.1"/>
    <property type="molecule type" value="Genomic_DNA"/>
</dbReference>
<dbReference type="RefSeq" id="WP_011111379.1">
    <property type="nucleotide sequence ID" value="NC_004757.1"/>
</dbReference>
<dbReference type="SMR" id="Q82WC5"/>
<dbReference type="STRING" id="228410.NE0767"/>
<dbReference type="GeneID" id="87103959"/>
<dbReference type="KEGG" id="neu:NE0767"/>
<dbReference type="eggNOG" id="COG2332">
    <property type="taxonomic scope" value="Bacteria"/>
</dbReference>
<dbReference type="HOGENOM" id="CLU_079503_1_1_4"/>
<dbReference type="OrthoDB" id="9793584at2"/>
<dbReference type="PhylomeDB" id="Q82WC5"/>
<dbReference type="Proteomes" id="UP000001416">
    <property type="component" value="Chromosome"/>
</dbReference>
<dbReference type="GO" id="GO:0005886">
    <property type="term" value="C:plasma membrane"/>
    <property type="evidence" value="ECO:0007669"/>
    <property type="project" value="UniProtKB-SubCell"/>
</dbReference>
<dbReference type="GO" id="GO:0020037">
    <property type="term" value="F:heme binding"/>
    <property type="evidence" value="ECO:0007669"/>
    <property type="project" value="InterPro"/>
</dbReference>
<dbReference type="GO" id="GO:0046872">
    <property type="term" value="F:metal ion binding"/>
    <property type="evidence" value="ECO:0007669"/>
    <property type="project" value="UniProtKB-KW"/>
</dbReference>
<dbReference type="GO" id="GO:0017004">
    <property type="term" value="P:cytochrome complex assembly"/>
    <property type="evidence" value="ECO:0007669"/>
    <property type="project" value="UniProtKB-KW"/>
</dbReference>
<dbReference type="FunFam" id="2.40.50.140:FF:000104">
    <property type="entry name" value="Cytochrome c-type biogenesis protein CcmE"/>
    <property type="match status" value="1"/>
</dbReference>
<dbReference type="Gene3D" id="2.40.50.140">
    <property type="entry name" value="Nucleic acid-binding proteins"/>
    <property type="match status" value="1"/>
</dbReference>
<dbReference type="HAMAP" id="MF_01959">
    <property type="entry name" value="CcmE"/>
    <property type="match status" value="1"/>
</dbReference>
<dbReference type="InterPro" id="IPR004329">
    <property type="entry name" value="CcmE"/>
</dbReference>
<dbReference type="InterPro" id="IPR036127">
    <property type="entry name" value="CcmE-like_sf"/>
</dbReference>
<dbReference type="InterPro" id="IPR012340">
    <property type="entry name" value="NA-bd_OB-fold"/>
</dbReference>
<dbReference type="NCBIfam" id="NF009727">
    <property type="entry name" value="PRK13254.1-1"/>
    <property type="match status" value="1"/>
</dbReference>
<dbReference type="NCBIfam" id="NF009729">
    <property type="entry name" value="PRK13254.1-3"/>
    <property type="match status" value="1"/>
</dbReference>
<dbReference type="NCBIfam" id="NF009731">
    <property type="entry name" value="PRK13254.1-5"/>
    <property type="match status" value="1"/>
</dbReference>
<dbReference type="PANTHER" id="PTHR34128">
    <property type="entry name" value="CYTOCHROME C-TYPE BIOGENESIS PROTEIN CCME HOMOLOG, MITOCHONDRIAL"/>
    <property type="match status" value="1"/>
</dbReference>
<dbReference type="PANTHER" id="PTHR34128:SF2">
    <property type="entry name" value="CYTOCHROME C-TYPE BIOGENESIS PROTEIN CCME HOMOLOG, MITOCHONDRIAL"/>
    <property type="match status" value="1"/>
</dbReference>
<dbReference type="Pfam" id="PF03100">
    <property type="entry name" value="CcmE"/>
    <property type="match status" value="1"/>
</dbReference>
<dbReference type="SUPFAM" id="SSF82093">
    <property type="entry name" value="Heme chaperone CcmE"/>
    <property type="match status" value="1"/>
</dbReference>
<sequence>MKPRHKKMAVIALSVSALTVAVVLVLNAFQSNLVFFFSPSQVAAKEAPIGKSFRIGGLVEEGSLKREGDGTTLNFAITDTAEVIRVVYTGILPDLFKEGKGVVAQGKMADDGIFYADEVLAKHDENYMPPEAASALEQAAKAQKTSLAQ</sequence>
<name>CCME_NITEU</name>
<proteinExistence type="inferred from homology"/>
<accession>Q82WC5</accession>
<keyword id="KW-0997">Cell inner membrane</keyword>
<keyword id="KW-1003">Cell membrane</keyword>
<keyword id="KW-0201">Cytochrome c-type biogenesis</keyword>
<keyword id="KW-0349">Heme</keyword>
<keyword id="KW-0408">Iron</keyword>
<keyword id="KW-0472">Membrane</keyword>
<keyword id="KW-0479">Metal-binding</keyword>
<keyword id="KW-1185">Reference proteome</keyword>
<keyword id="KW-0735">Signal-anchor</keyword>
<keyword id="KW-0812">Transmembrane</keyword>
<keyword id="KW-1133">Transmembrane helix</keyword>